<accession>O13076</accession>
<accession>Q540H7</accession>
<dbReference type="EMBL" id="Y12601">
    <property type="protein sequence ID" value="CAA73173.1"/>
    <property type="molecule type" value="mRNA"/>
</dbReference>
<dbReference type="EMBL" id="AY169692">
    <property type="protein sequence ID" value="AAN87848.1"/>
    <property type="molecule type" value="Genomic_DNA"/>
</dbReference>
<dbReference type="RefSeq" id="NP_990418.1">
    <property type="nucleotide sequence ID" value="NM_205087.2"/>
</dbReference>
<dbReference type="SMR" id="O13076"/>
<dbReference type="FunCoup" id="O13076">
    <property type="interactions" value="166"/>
</dbReference>
<dbReference type="STRING" id="9031.ENSGALP00000027991"/>
<dbReference type="GlyCosmos" id="O13076">
    <property type="glycosylation" value="2 sites, No reported glycans"/>
</dbReference>
<dbReference type="GlyGen" id="O13076">
    <property type="glycosylation" value="2 sites"/>
</dbReference>
<dbReference type="PaxDb" id="9031-ENSGALP00000027991"/>
<dbReference type="Ensembl" id="ENSGALT00010071898.1">
    <property type="protein sequence ID" value="ENSGALP00010044588.1"/>
    <property type="gene ID" value="ENSGALG00010029723.1"/>
</dbReference>
<dbReference type="GeneID" id="395971"/>
<dbReference type="KEGG" id="gga:395971"/>
<dbReference type="CTD" id="136"/>
<dbReference type="VEuPathDB" id="HostDB:geneid_395971"/>
<dbReference type="eggNOG" id="KOG3656">
    <property type="taxonomic scope" value="Eukaryota"/>
</dbReference>
<dbReference type="GeneTree" id="ENSGT01030000234555"/>
<dbReference type="HOGENOM" id="CLU_009579_11_5_1"/>
<dbReference type="InParanoid" id="O13076"/>
<dbReference type="OMA" id="PVKCLFE"/>
<dbReference type="OrthoDB" id="9445642at2759"/>
<dbReference type="PhylomeDB" id="O13076"/>
<dbReference type="Reactome" id="R-GGA-417973">
    <property type="pathway name" value="Adenosine P1 receptors"/>
</dbReference>
<dbReference type="Reactome" id="R-GGA-418555">
    <property type="pathway name" value="G alpha (s) signalling events"/>
</dbReference>
<dbReference type="Reactome" id="R-GGA-5683826">
    <property type="pathway name" value="Surfactant metabolism"/>
</dbReference>
<dbReference type="PRO" id="PR:O13076"/>
<dbReference type="Proteomes" id="UP000000539">
    <property type="component" value="Chromosome 19"/>
</dbReference>
<dbReference type="Bgee" id="ENSGALG00000014182">
    <property type="expression patterns" value="Expressed in cerebellum and 11 other cell types or tissues"/>
</dbReference>
<dbReference type="GO" id="GO:0098978">
    <property type="term" value="C:glutamatergic synapse"/>
    <property type="evidence" value="ECO:0007669"/>
    <property type="project" value="Ensembl"/>
</dbReference>
<dbReference type="GO" id="GO:0005886">
    <property type="term" value="C:plasma membrane"/>
    <property type="evidence" value="ECO:0000318"/>
    <property type="project" value="GO_Central"/>
</dbReference>
<dbReference type="GO" id="GO:0098793">
    <property type="term" value="C:presynapse"/>
    <property type="evidence" value="ECO:0007669"/>
    <property type="project" value="GOC"/>
</dbReference>
<dbReference type="GO" id="GO:0098685">
    <property type="term" value="C:Schaffer collateral - CA1 synapse"/>
    <property type="evidence" value="ECO:0007669"/>
    <property type="project" value="Ensembl"/>
</dbReference>
<dbReference type="GO" id="GO:0001609">
    <property type="term" value="F:G protein-coupled adenosine receptor activity"/>
    <property type="evidence" value="ECO:0007669"/>
    <property type="project" value="Ensembl"/>
</dbReference>
<dbReference type="GO" id="GO:0004930">
    <property type="term" value="F:G protein-coupled receptor activity"/>
    <property type="evidence" value="ECO:0000318"/>
    <property type="project" value="GO_Central"/>
</dbReference>
<dbReference type="GO" id="GO:0007189">
    <property type="term" value="P:adenylate cyclase-activating G protein-coupled receptor signaling pathway"/>
    <property type="evidence" value="ECO:0000318"/>
    <property type="project" value="GO_Central"/>
</dbReference>
<dbReference type="GO" id="GO:0019934">
    <property type="term" value="P:cGMP-mediated signaling"/>
    <property type="evidence" value="ECO:0007669"/>
    <property type="project" value="Ensembl"/>
</dbReference>
<dbReference type="GO" id="GO:0043303">
    <property type="term" value="P:mast cell degranulation"/>
    <property type="evidence" value="ECO:0007669"/>
    <property type="project" value="Ensembl"/>
</dbReference>
<dbReference type="GO" id="GO:0010753">
    <property type="term" value="P:positive regulation of cGMP-mediated signaling"/>
    <property type="evidence" value="ECO:0007669"/>
    <property type="project" value="Ensembl"/>
</dbReference>
<dbReference type="GO" id="GO:0032722">
    <property type="term" value="P:positive regulation of chemokine production"/>
    <property type="evidence" value="ECO:0007669"/>
    <property type="project" value="Ensembl"/>
</dbReference>
<dbReference type="GO" id="GO:0002882">
    <property type="term" value="P:positive regulation of chronic inflammatory response to non-antigenic stimulus"/>
    <property type="evidence" value="ECO:0007669"/>
    <property type="project" value="Ensembl"/>
</dbReference>
<dbReference type="GO" id="GO:0032755">
    <property type="term" value="P:positive regulation of interleukin-6 production"/>
    <property type="evidence" value="ECO:0007669"/>
    <property type="project" value="Ensembl"/>
</dbReference>
<dbReference type="GO" id="GO:0043306">
    <property type="term" value="P:positive regulation of mast cell degranulation"/>
    <property type="evidence" value="ECO:0007669"/>
    <property type="project" value="Ensembl"/>
</dbReference>
<dbReference type="GO" id="GO:0010575">
    <property type="term" value="P:positive regulation of vascular endothelial growth factor production"/>
    <property type="evidence" value="ECO:0007669"/>
    <property type="project" value="Ensembl"/>
</dbReference>
<dbReference type="GO" id="GO:0099171">
    <property type="term" value="P:presynaptic modulation of chemical synaptic transmission"/>
    <property type="evidence" value="ECO:0007669"/>
    <property type="project" value="Ensembl"/>
</dbReference>
<dbReference type="GO" id="GO:0060087">
    <property type="term" value="P:relaxation of vascular associated smooth muscle"/>
    <property type="evidence" value="ECO:0007669"/>
    <property type="project" value="Ensembl"/>
</dbReference>
<dbReference type="GO" id="GO:0042311">
    <property type="term" value="P:vasodilation"/>
    <property type="evidence" value="ECO:0000318"/>
    <property type="project" value="GO_Central"/>
</dbReference>
<dbReference type="CDD" id="cd15069">
    <property type="entry name" value="7tmA_Adenosine_R_A2B"/>
    <property type="match status" value="1"/>
</dbReference>
<dbReference type="FunFam" id="1.20.1070.10:FF:000061">
    <property type="entry name" value="Adenosine receptor A2"/>
    <property type="match status" value="1"/>
</dbReference>
<dbReference type="Gene3D" id="1.20.1070.10">
    <property type="entry name" value="Rhodopsin 7-helix transmembrane proteins"/>
    <property type="match status" value="1"/>
</dbReference>
<dbReference type="InterPro" id="IPR001435">
    <property type="entry name" value="Adeno_A2B_rcpt"/>
</dbReference>
<dbReference type="InterPro" id="IPR001634">
    <property type="entry name" value="Adenosn_rcpt"/>
</dbReference>
<dbReference type="InterPro" id="IPR000276">
    <property type="entry name" value="GPCR_Rhodpsn"/>
</dbReference>
<dbReference type="InterPro" id="IPR017452">
    <property type="entry name" value="GPCR_Rhodpsn_7TM"/>
</dbReference>
<dbReference type="PANTHER" id="PTHR24246:SF18">
    <property type="entry name" value="ADENOSINE RECEPTOR A2B"/>
    <property type="match status" value="1"/>
</dbReference>
<dbReference type="PANTHER" id="PTHR24246">
    <property type="entry name" value="OLFACTORY RECEPTOR AND ADENOSINE RECEPTOR"/>
    <property type="match status" value="1"/>
</dbReference>
<dbReference type="Pfam" id="PF00001">
    <property type="entry name" value="7tm_1"/>
    <property type="match status" value="1"/>
</dbReference>
<dbReference type="PRINTS" id="PR00554">
    <property type="entry name" value="ADENOSINA2BR"/>
</dbReference>
<dbReference type="PRINTS" id="PR00424">
    <property type="entry name" value="ADENOSINER"/>
</dbReference>
<dbReference type="PRINTS" id="PR00237">
    <property type="entry name" value="GPCRRHODOPSN"/>
</dbReference>
<dbReference type="SMART" id="SM01381">
    <property type="entry name" value="7TM_GPCR_Srsx"/>
    <property type="match status" value="1"/>
</dbReference>
<dbReference type="SUPFAM" id="SSF81321">
    <property type="entry name" value="Family A G protein-coupled receptor-like"/>
    <property type="match status" value="1"/>
</dbReference>
<dbReference type="PROSITE" id="PS00237">
    <property type="entry name" value="G_PROTEIN_RECEP_F1_1"/>
    <property type="match status" value="1"/>
</dbReference>
<dbReference type="PROSITE" id="PS50262">
    <property type="entry name" value="G_PROTEIN_RECEP_F1_2"/>
    <property type="match status" value="1"/>
</dbReference>
<sequence>MNTMKTTYIVLELIIAVLSIAGNVLVCWAVAINSTLKNATNYFLVSLAVADIAVGLLAIPFAITISIGFQVDFHSCLFFACFVLVLTQSSIFSLLAVAIDRYLAIKIPLRYNSLVTGKRARGLIAVLWLLSFVIGLTPLMGWNKAMSGCPNSTNETGADHGAGHHGCFISCLFENVVTMSYMVYFNFFGCVLLPLIIMLGIYIKIFMVACKQLHQIELMGNSRTTLQKEVHAAKSLAIIVGLFAFCWLPLHILNCITHFHEEFSKSKPEWVMYVAIILSHANSVINPIIYAYRIRDFRYTFHKIISKILCKTDDFPKCTTDNNQHLTVTNVNAPAASVTI</sequence>
<gene>
    <name type="primary">ADORA2B</name>
</gene>
<name>AA2BR_CHICK</name>
<reference key="1">
    <citation type="journal article" date="1997" name="Oncogene">
        <title>The chicken adenosine receptor 2B gene is regulated by v-myb.</title>
        <authorList>
            <person name="Worpenberg S."/>
            <person name="Burk O."/>
            <person name="Klempnauer K.H."/>
        </authorList>
    </citation>
    <scope>NUCLEOTIDE SEQUENCE [MRNA]</scope>
    <source>
        <strain>SPAFAS</strain>
    </source>
</reference>
<reference key="2">
    <citation type="journal article" date="2003" name="Gene">
        <title>Analysis of DNase I-hypersensitive sites in the chromatin of the chicken adenosine receptor 2B gene reveals multiple cell-type-specific cis-regulatory elements.</title>
        <authorList>
            <person name="Braas D."/>
            <person name="Kattmann D."/>
            <person name="Miethe J."/>
            <person name="Klempnauer K.H."/>
        </authorList>
    </citation>
    <scope>NUCLEOTIDE SEQUENCE [GENOMIC DNA]</scope>
</reference>
<keyword id="KW-1003">Cell membrane</keyword>
<keyword id="KW-1015">Disulfide bond</keyword>
<keyword id="KW-0297">G-protein coupled receptor</keyword>
<keyword id="KW-0325">Glycoprotein</keyword>
<keyword id="KW-0449">Lipoprotein</keyword>
<keyword id="KW-0472">Membrane</keyword>
<keyword id="KW-0564">Palmitate</keyword>
<keyword id="KW-0675">Receptor</keyword>
<keyword id="KW-1185">Reference proteome</keyword>
<keyword id="KW-0807">Transducer</keyword>
<keyword id="KW-0812">Transmembrane</keyword>
<keyword id="KW-1133">Transmembrane helix</keyword>
<feature type="chain" id="PRO_0000069006" description="Adenosine receptor A2b">
    <location>
        <begin position="1"/>
        <end position="340"/>
    </location>
</feature>
<feature type="topological domain" description="Extracellular" evidence="1">
    <location>
        <begin position="1"/>
        <end position="6"/>
    </location>
</feature>
<feature type="transmembrane region" description="Helical; Name=1" evidence="1">
    <location>
        <begin position="7"/>
        <end position="31"/>
    </location>
</feature>
<feature type="topological domain" description="Cytoplasmic" evidence="1">
    <location>
        <begin position="32"/>
        <end position="41"/>
    </location>
</feature>
<feature type="transmembrane region" description="Helical; Name=2" evidence="1">
    <location>
        <begin position="42"/>
        <end position="65"/>
    </location>
</feature>
<feature type="topological domain" description="Extracellular" evidence="1">
    <location>
        <begin position="66"/>
        <end position="76"/>
    </location>
</feature>
<feature type="transmembrane region" description="Helical; Name=3" evidence="1">
    <location>
        <begin position="77"/>
        <end position="99"/>
    </location>
</feature>
<feature type="topological domain" description="Cytoplasmic" evidence="1">
    <location>
        <begin position="100"/>
        <end position="119"/>
    </location>
</feature>
<feature type="transmembrane region" description="Helical; Name=4" evidence="1">
    <location>
        <begin position="120"/>
        <end position="142"/>
    </location>
</feature>
<feature type="topological domain" description="Extracellular" evidence="1">
    <location>
        <begin position="143"/>
        <end position="178"/>
    </location>
</feature>
<feature type="transmembrane region" description="Helical; Name=5" evidence="1">
    <location>
        <begin position="179"/>
        <end position="203"/>
    </location>
</feature>
<feature type="topological domain" description="Cytoplasmic" evidence="1">
    <location>
        <begin position="204"/>
        <end position="235"/>
    </location>
</feature>
<feature type="transmembrane region" description="Helical; Name=6" evidence="1">
    <location>
        <begin position="236"/>
        <end position="259"/>
    </location>
</feature>
<feature type="topological domain" description="Extracellular" evidence="1">
    <location>
        <begin position="260"/>
        <end position="267"/>
    </location>
</feature>
<feature type="transmembrane region" description="Helical; Name=7" evidence="1">
    <location>
        <begin position="268"/>
        <end position="291"/>
    </location>
</feature>
<feature type="topological domain" description="Cytoplasmic" evidence="1">
    <location>
        <begin position="292"/>
        <end position="340"/>
    </location>
</feature>
<feature type="binding site" evidence="2">
    <location>
        <position position="174"/>
    </location>
    <ligand>
        <name>adenosine</name>
        <dbReference type="ChEBI" id="CHEBI:16335"/>
        <note>agonist</note>
    </ligand>
</feature>
<feature type="binding site" evidence="2">
    <location>
        <position position="254"/>
    </location>
    <ligand>
        <name>adenosine</name>
        <dbReference type="ChEBI" id="CHEBI:16335"/>
        <note>agonist</note>
    </ligand>
</feature>
<feature type="binding site" evidence="2">
    <location>
        <position position="279"/>
    </location>
    <ligand>
        <name>adenosine</name>
        <dbReference type="ChEBI" id="CHEBI:16335"/>
        <note>agonist</note>
    </ligand>
</feature>
<feature type="binding site" evidence="2">
    <location>
        <position position="280"/>
    </location>
    <ligand>
        <name>adenosine</name>
        <dbReference type="ChEBI" id="CHEBI:16335"/>
        <note>agonist</note>
    </ligand>
</feature>
<feature type="lipid moiety-binding region" description="S-palmitoyl cysteine" evidence="3">
    <location>
        <position position="310"/>
    </location>
</feature>
<feature type="glycosylation site" description="N-linked (GlcNAc...) asparagine" evidence="3">
    <location>
        <position position="151"/>
    </location>
</feature>
<feature type="glycosylation site" description="N-linked (GlcNAc...) asparagine" evidence="3">
    <location>
        <position position="154"/>
    </location>
</feature>
<feature type="disulfide bond" evidence="4">
    <location>
        <begin position="76"/>
        <end position="171"/>
    </location>
</feature>
<proteinExistence type="evidence at transcript level"/>
<comment type="function">
    <text>Receptor for adenosine. The activity of this receptor is mediated by G proteins which activate adenylyl cyclase.</text>
</comment>
<comment type="subcellular location">
    <subcellularLocation>
        <location>Cell membrane</location>
        <topology>Multi-pass membrane protein</topology>
    </subcellularLocation>
</comment>
<comment type="similarity">
    <text evidence="4">Belongs to the G-protein coupled receptor 1 family.</text>
</comment>
<evidence type="ECO:0000250" key="1"/>
<evidence type="ECO:0000250" key="2">
    <source>
        <dbReference type="UniProtKB" id="P29274"/>
    </source>
</evidence>
<evidence type="ECO:0000255" key="3"/>
<evidence type="ECO:0000255" key="4">
    <source>
        <dbReference type="PROSITE-ProRule" id="PRU00521"/>
    </source>
</evidence>
<protein>
    <recommendedName>
        <fullName>Adenosine receptor A2b</fullName>
    </recommendedName>
    <alternativeName>
        <fullName>Adenosine receptor 2b</fullName>
    </alternativeName>
</protein>
<organism>
    <name type="scientific">Gallus gallus</name>
    <name type="common">Chicken</name>
    <dbReference type="NCBI Taxonomy" id="9031"/>
    <lineage>
        <taxon>Eukaryota</taxon>
        <taxon>Metazoa</taxon>
        <taxon>Chordata</taxon>
        <taxon>Craniata</taxon>
        <taxon>Vertebrata</taxon>
        <taxon>Euteleostomi</taxon>
        <taxon>Archelosauria</taxon>
        <taxon>Archosauria</taxon>
        <taxon>Dinosauria</taxon>
        <taxon>Saurischia</taxon>
        <taxon>Theropoda</taxon>
        <taxon>Coelurosauria</taxon>
        <taxon>Aves</taxon>
        <taxon>Neognathae</taxon>
        <taxon>Galloanserae</taxon>
        <taxon>Galliformes</taxon>
        <taxon>Phasianidae</taxon>
        <taxon>Phasianinae</taxon>
        <taxon>Gallus</taxon>
    </lineage>
</organism>